<comment type="function">
    <text evidence="1">Cell wall formation.</text>
</comment>
<comment type="catalytic activity">
    <reaction evidence="1">
        <text>UDP-N-acetyl-alpha-D-muramate + L-alanine + ATP = UDP-N-acetyl-alpha-D-muramoyl-L-alanine + ADP + phosphate + H(+)</text>
        <dbReference type="Rhea" id="RHEA:23372"/>
        <dbReference type="ChEBI" id="CHEBI:15378"/>
        <dbReference type="ChEBI" id="CHEBI:30616"/>
        <dbReference type="ChEBI" id="CHEBI:43474"/>
        <dbReference type="ChEBI" id="CHEBI:57972"/>
        <dbReference type="ChEBI" id="CHEBI:70757"/>
        <dbReference type="ChEBI" id="CHEBI:83898"/>
        <dbReference type="ChEBI" id="CHEBI:456216"/>
        <dbReference type="EC" id="6.3.2.8"/>
    </reaction>
</comment>
<comment type="pathway">
    <text evidence="1">Cell wall biogenesis; peptidoglycan biosynthesis.</text>
</comment>
<comment type="subcellular location">
    <subcellularLocation>
        <location evidence="1">Cytoplasm</location>
    </subcellularLocation>
</comment>
<comment type="similarity">
    <text evidence="1">Belongs to the MurCDEF family.</text>
</comment>
<evidence type="ECO:0000255" key="1">
    <source>
        <dbReference type="HAMAP-Rule" id="MF_00046"/>
    </source>
</evidence>
<feature type="chain" id="PRO_1000091103" description="UDP-N-acetylmuramate--L-alanine ligase">
    <location>
        <begin position="1"/>
        <end position="451"/>
    </location>
</feature>
<feature type="binding site" evidence="1">
    <location>
        <begin position="110"/>
        <end position="116"/>
    </location>
    <ligand>
        <name>ATP</name>
        <dbReference type="ChEBI" id="CHEBI:30616"/>
    </ligand>
</feature>
<keyword id="KW-0067">ATP-binding</keyword>
<keyword id="KW-0131">Cell cycle</keyword>
<keyword id="KW-0132">Cell division</keyword>
<keyword id="KW-0133">Cell shape</keyword>
<keyword id="KW-0961">Cell wall biogenesis/degradation</keyword>
<keyword id="KW-0963">Cytoplasm</keyword>
<keyword id="KW-0436">Ligase</keyword>
<keyword id="KW-0547">Nucleotide-binding</keyword>
<keyword id="KW-0573">Peptidoglycan synthesis</keyword>
<protein>
    <recommendedName>
        <fullName evidence="1">UDP-N-acetylmuramate--L-alanine ligase</fullName>
        <ecNumber evidence="1">6.3.2.8</ecNumber>
    </recommendedName>
    <alternativeName>
        <fullName evidence="1">UDP-N-acetylmuramoyl-L-alanine synthetase</fullName>
    </alternativeName>
</protein>
<dbReference type="EC" id="6.3.2.8" evidence="1"/>
<dbReference type="EMBL" id="CP000915">
    <property type="protein sequence ID" value="ACD31418.1"/>
    <property type="molecule type" value="Genomic_DNA"/>
</dbReference>
<dbReference type="SMR" id="B2SE51"/>
<dbReference type="KEGG" id="ftm:FTM_1610"/>
<dbReference type="HOGENOM" id="CLU_028104_2_2_6"/>
<dbReference type="UniPathway" id="UPA00219"/>
<dbReference type="GO" id="GO:0005737">
    <property type="term" value="C:cytoplasm"/>
    <property type="evidence" value="ECO:0007669"/>
    <property type="project" value="UniProtKB-SubCell"/>
</dbReference>
<dbReference type="GO" id="GO:0005524">
    <property type="term" value="F:ATP binding"/>
    <property type="evidence" value="ECO:0007669"/>
    <property type="project" value="UniProtKB-UniRule"/>
</dbReference>
<dbReference type="GO" id="GO:0008763">
    <property type="term" value="F:UDP-N-acetylmuramate-L-alanine ligase activity"/>
    <property type="evidence" value="ECO:0007669"/>
    <property type="project" value="UniProtKB-UniRule"/>
</dbReference>
<dbReference type="GO" id="GO:0051301">
    <property type="term" value="P:cell division"/>
    <property type="evidence" value="ECO:0007669"/>
    <property type="project" value="UniProtKB-KW"/>
</dbReference>
<dbReference type="GO" id="GO:0071555">
    <property type="term" value="P:cell wall organization"/>
    <property type="evidence" value="ECO:0007669"/>
    <property type="project" value="UniProtKB-KW"/>
</dbReference>
<dbReference type="GO" id="GO:0009252">
    <property type="term" value="P:peptidoglycan biosynthetic process"/>
    <property type="evidence" value="ECO:0007669"/>
    <property type="project" value="UniProtKB-UniRule"/>
</dbReference>
<dbReference type="GO" id="GO:0008360">
    <property type="term" value="P:regulation of cell shape"/>
    <property type="evidence" value="ECO:0007669"/>
    <property type="project" value="UniProtKB-KW"/>
</dbReference>
<dbReference type="Gene3D" id="3.90.190.20">
    <property type="entry name" value="Mur ligase, C-terminal domain"/>
    <property type="match status" value="1"/>
</dbReference>
<dbReference type="Gene3D" id="3.40.1190.10">
    <property type="entry name" value="Mur-like, catalytic domain"/>
    <property type="match status" value="1"/>
</dbReference>
<dbReference type="Gene3D" id="3.40.50.720">
    <property type="entry name" value="NAD(P)-binding Rossmann-like Domain"/>
    <property type="match status" value="1"/>
</dbReference>
<dbReference type="HAMAP" id="MF_00046">
    <property type="entry name" value="MurC"/>
    <property type="match status" value="1"/>
</dbReference>
<dbReference type="InterPro" id="IPR036565">
    <property type="entry name" value="Mur-like_cat_sf"/>
</dbReference>
<dbReference type="InterPro" id="IPR004101">
    <property type="entry name" value="Mur_ligase_C"/>
</dbReference>
<dbReference type="InterPro" id="IPR036615">
    <property type="entry name" value="Mur_ligase_C_dom_sf"/>
</dbReference>
<dbReference type="InterPro" id="IPR013221">
    <property type="entry name" value="Mur_ligase_cen"/>
</dbReference>
<dbReference type="InterPro" id="IPR000713">
    <property type="entry name" value="Mur_ligase_N"/>
</dbReference>
<dbReference type="InterPro" id="IPR050061">
    <property type="entry name" value="MurCDEF_pg_biosynth"/>
</dbReference>
<dbReference type="InterPro" id="IPR005758">
    <property type="entry name" value="UDP-N-AcMur_Ala_ligase_MurC"/>
</dbReference>
<dbReference type="NCBIfam" id="TIGR01082">
    <property type="entry name" value="murC"/>
    <property type="match status" value="1"/>
</dbReference>
<dbReference type="PANTHER" id="PTHR43445:SF3">
    <property type="entry name" value="UDP-N-ACETYLMURAMATE--L-ALANINE LIGASE"/>
    <property type="match status" value="1"/>
</dbReference>
<dbReference type="PANTHER" id="PTHR43445">
    <property type="entry name" value="UDP-N-ACETYLMURAMATE--L-ALANINE LIGASE-RELATED"/>
    <property type="match status" value="1"/>
</dbReference>
<dbReference type="Pfam" id="PF01225">
    <property type="entry name" value="Mur_ligase"/>
    <property type="match status" value="1"/>
</dbReference>
<dbReference type="Pfam" id="PF02875">
    <property type="entry name" value="Mur_ligase_C"/>
    <property type="match status" value="1"/>
</dbReference>
<dbReference type="Pfam" id="PF08245">
    <property type="entry name" value="Mur_ligase_M"/>
    <property type="match status" value="1"/>
</dbReference>
<dbReference type="SUPFAM" id="SSF51984">
    <property type="entry name" value="MurCD N-terminal domain"/>
    <property type="match status" value="1"/>
</dbReference>
<dbReference type="SUPFAM" id="SSF53623">
    <property type="entry name" value="MurD-like peptide ligases, catalytic domain"/>
    <property type="match status" value="1"/>
</dbReference>
<dbReference type="SUPFAM" id="SSF53244">
    <property type="entry name" value="MurD-like peptide ligases, peptide-binding domain"/>
    <property type="match status" value="1"/>
</dbReference>
<organism>
    <name type="scientific">Francisella tularensis subsp. mediasiatica (strain FSC147)</name>
    <dbReference type="NCBI Taxonomy" id="441952"/>
    <lineage>
        <taxon>Bacteria</taxon>
        <taxon>Pseudomonadati</taxon>
        <taxon>Pseudomonadota</taxon>
        <taxon>Gammaproteobacteria</taxon>
        <taxon>Thiotrichales</taxon>
        <taxon>Francisellaceae</taxon>
        <taxon>Francisella</taxon>
    </lineage>
</organism>
<proteinExistence type="inferred from homology"/>
<reference key="1">
    <citation type="journal article" date="2009" name="PLoS Pathog.">
        <title>Molecular evolutionary consequences of niche restriction in Francisella tularensis, a facultative intracellular pathogen.</title>
        <authorList>
            <person name="Larsson P."/>
            <person name="Elfsmark D."/>
            <person name="Svensson K."/>
            <person name="Wikstroem P."/>
            <person name="Forsman M."/>
            <person name="Brettin T."/>
            <person name="Keim P."/>
            <person name="Johansson A."/>
        </authorList>
    </citation>
    <scope>NUCLEOTIDE SEQUENCE [LARGE SCALE GENOMIC DNA]</scope>
    <source>
        <strain>FSC147</strain>
    </source>
</reference>
<gene>
    <name evidence="1" type="primary">murC</name>
    <name type="ordered locus">FTM_1610</name>
</gene>
<name>MURC_FRATM</name>
<sequence length="451" mass="49763">MNKKILFLGVGGIGVSALAIAAKRLGAHVAGYDSVANKLTAKLEALGIVIFTSPNGVDVANFDIVVYSSAILSSHPLLSQARSLGIQCLQRAMFLSVLMKDFSYSIAITGTHGKTTTSSVLATLLCQLDKYSSFIVGGVVKYADSNIQVNGTDKLVIEADESDASFLFLSPQVVIITNIDLDHMATYNNSYQTLLENFTDFVSKESVKSIYLCVDDQGCRDLLAKYNQSDKNVTSYGFSIDADVQIYDYHIIDEITHFKIRYKGDDLSFKLQLPGRYNVQNATACIIACLDLGFKYEDIRNALIKVTGVARRFDLYTKVISGHQVTVIDDYGHHPVEVANSISAVRDRYPNKKIIHVFQPHRYTRNRDLIKDWPKALSLADQLILLPTYSADEQIIKGAESQDIVKGLSGYLLADGFDHAIYFLEKLANENTVILIQGAGDVTNLVEILSE</sequence>
<accession>B2SE51</accession>